<proteinExistence type="inferred from homology"/>
<gene>
    <name evidence="1" type="primary">rpmF</name>
    <name type="ordered locus">Neut_0472</name>
</gene>
<reference key="1">
    <citation type="journal article" date="2007" name="Environ. Microbiol.">
        <title>Whole-genome analysis of the ammonia-oxidizing bacterium, Nitrosomonas eutropha C91: implications for niche adaptation.</title>
        <authorList>
            <person name="Stein L.Y."/>
            <person name="Arp D.J."/>
            <person name="Berube P.M."/>
            <person name="Chain P.S."/>
            <person name="Hauser L."/>
            <person name="Jetten M.S."/>
            <person name="Klotz M.G."/>
            <person name="Larimer F.W."/>
            <person name="Norton J.M."/>
            <person name="Op den Camp H.J.M."/>
            <person name="Shin M."/>
            <person name="Wei X."/>
        </authorList>
    </citation>
    <scope>NUCLEOTIDE SEQUENCE [LARGE SCALE GENOMIC DNA]</scope>
    <source>
        <strain>DSM 101675 / C91 / Nm57</strain>
    </source>
</reference>
<organism>
    <name type="scientific">Nitrosomonas eutropha (strain DSM 101675 / C91 / Nm57)</name>
    <dbReference type="NCBI Taxonomy" id="335283"/>
    <lineage>
        <taxon>Bacteria</taxon>
        <taxon>Pseudomonadati</taxon>
        <taxon>Pseudomonadota</taxon>
        <taxon>Betaproteobacteria</taxon>
        <taxon>Nitrosomonadales</taxon>
        <taxon>Nitrosomonadaceae</taxon>
        <taxon>Nitrosomonas</taxon>
    </lineage>
</organism>
<accession>Q0AIS2</accession>
<sequence>MAVQQNKKSPSKRGMHRSHDALTNPPLAIEPTTGETHLRHHISPNGFYRGKKVIKTKNDD</sequence>
<comment type="similarity">
    <text evidence="1">Belongs to the bacterial ribosomal protein bL32 family.</text>
</comment>
<protein>
    <recommendedName>
        <fullName evidence="1">Large ribosomal subunit protein bL32</fullName>
    </recommendedName>
    <alternativeName>
        <fullName evidence="3">50S ribosomal protein L32</fullName>
    </alternativeName>
</protein>
<feature type="chain" id="PRO_0000296516" description="Large ribosomal subunit protein bL32">
    <location>
        <begin position="1"/>
        <end position="60"/>
    </location>
</feature>
<feature type="region of interest" description="Disordered" evidence="2">
    <location>
        <begin position="1"/>
        <end position="60"/>
    </location>
</feature>
<feature type="compositionally biased region" description="Basic residues" evidence="2">
    <location>
        <begin position="49"/>
        <end position="60"/>
    </location>
</feature>
<keyword id="KW-0687">Ribonucleoprotein</keyword>
<keyword id="KW-0689">Ribosomal protein</keyword>
<dbReference type="EMBL" id="CP000450">
    <property type="protein sequence ID" value="ABI58749.1"/>
    <property type="molecule type" value="Genomic_DNA"/>
</dbReference>
<dbReference type="RefSeq" id="WP_011633591.1">
    <property type="nucleotide sequence ID" value="NC_008344.1"/>
</dbReference>
<dbReference type="SMR" id="Q0AIS2"/>
<dbReference type="STRING" id="335283.Neut_0472"/>
<dbReference type="KEGG" id="net:Neut_0472"/>
<dbReference type="eggNOG" id="COG0333">
    <property type="taxonomic scope" value="Bacteria"/>
</dbReference>
<dbReference type="HOGENOM" id="CLU_129084_2_1_4"/>
<dbReference type="OrthoDB" id="9801927at2"/>
<dbReference type="Proteomes" id="UP000001966">
    <property type="component" value="Chromosome"/>
</dbReference>
<dbReference type="GO" id="GO:0015934">
    <property type="term" value="C:large ribosomal subunit"/>
    <property type="evidence" value="ECO:0007669"/>
    <property type="project" value="InterPro"/>
</dbReference>
<dbReference type="GO" id="GO:0003735">
    <property type="term" value="F:structural constituent of ribosome"/>
    <property type="evidence" value="ECO:0007669"/>
    <property type="project" value="InterPro"/>
</dbReference>
<dbReference type="GO" id="GO:0006412">
    <property type="term" value="P:translation"/>
    <property type="evidence" value="ECO:0007669"/>
    <property type="project" value="UniProtKB-UniRule"/>
</dbReference>
<dbReference type="HAMAP" id="MF_00340">
    <property type="entry name" value="Ribosomal_bL32"/>
    <property type="match status" value="1"/>
</dbReference>
<dbReference type="InterPro" id="IPR002677">
    <property type="entry name" value="Ribosomal_bL32"/>
</dbReference>
<dbReference type="InterPro" id="IPR044957">
    <property type="entry name" value="Ribosomal_bL32_bact"/>
</dbReference>
<dbReference type="InterPro" id="IPR011332">
    <property type="entry name" value="Ribosomal_zn-bd"/>
</dbReference>
<dbReference type="NCBIfam" id="TIGR01031">
    <property type="entry name" value="rpmF_bact"/>
    <property type="match status" value="1"/>
</dbReference>
<dbReference type="PANTHER" id="PTHR35534">
    <property type="entry name" value="50S RIBOSOMAL PROTEIN L32"/>
    <property type="match status" value="1"/>
</dbReference>
<dbReference type="PANTHER" id="PTHR35534:SF1">
    <property type="entry name" value="LARGE RIBOSOMAL SUBUNIT PROTEIN BL32"/>
    <property type="match status" value="1"/>
</dbReference>
<dbReference type="Pfam" id="PF01783">
    <property type="entry name" value="Ribosomal_L32p"/>
    <property type="match status" value="1"/>
</dbReference>
<dbReference type="SUPFAM" id="SSF57829">
    <property type="entry name" value="Zn-binding ribosomal proteins"/>
    <property type="match status" value="1"/>
</dbReference>
<evidence type="ECO:0000255" key="1">
    <source>
        <dbReference type="HAMAP-Rule" id="MF_00340"/>
    </source>
</evidence>
<evidence type="ECO:0000256" key="2">
    <source>
        <dbReference type="SAM" id="MobiDB-lite"/>
    </source>
</evidence>
<evidence type="ECO:0000305" key="3"/>
<name>RL32_NITEC</name>